<geneLocation type="plasmid">
    <name>sym pNGR234a</name>
</geneLocation>
<sequence length="335" mass="37083">MRMQSNPKADLLLDVRDLETHFYGEESVTRALGGVNFHVKSGEMLGIVGESGCGKSVTALSILRLLPKQTAKTVGGEVIFKGRNLLELSERQMREVRGNRIAMIFQDPMTSLSPVHTVGRQIAEAVQIHGRVSRAEALEKALEMLRLVRIADPERRLNNYPHEMSGGMRQRAMIAMALACSPELLIADEPTTALDVTIQAQILRLIVDLKDRMGTAVMFITHDLGVVAETCQRVIVMYAGRIVEQASVTDLFARPTHPYTRALMNSVPDRRRGRQSRLPEIPGVVPSLREPLVGCSFAERCPFAIGVCREKMPVLSEIQPGHAAACWRSNEVVNL</sequence>
<organism>
    <name type="scientific">Sinorhizobium fredii (strain NBRC 101917 / NGR234)</name>
    <dbReference type="NCBI Taxonomy" id="394"/>
    <lineage>
        <taxon>Bacteria</taxon>
        <taxon>Pseudomonadati</taxon>
        <taxon>Pseudomonadota</taxon>
        <taxon>Alphaproteobacteria</taxon>
        <taxon>Hyphomicrobiales</taxon>
        <taxon>Rhizobiaceae</taxon>
        <taxon>Sinorhizobium/Ensifer group</taxon>
        <taxon>Sinorhizobium</taxon>
    </lineage>
</organism>
<keyword id="KW-0029">Amino-acid transport</keyword>
<keyword id="KW-0067">ATP-binding</keyword>
<keyword id="KW-0997">Cell inner membrane</keyword>
<keyword id="KW-1003">Cell membrane</keyword>
<keyword id="KW-0472">Membrane</keyword>
<keyword id="KW-0547">Nucleotide-binding</keyword>
<keyword id="KW-0614">Plasmid</keyword>
<keyword id="KW-1185">Reference proteome</keyword>
<keyword id="KW-0813">Transport</keyword>
<accession>Q53193</accession>
<reference key="1">
    <citation type="journal article" date="1996" name="Genome Res.">
        <title>Sequencing the 500-kb GC-rich symbiotic replicon of Rhizobium sp. NGR234 using dye terminators and a thermostable 'sequenase': a beginning.</title>
        <authorList>
            <person name="Freiberg C."/>
            <person name="Perret X."/>
            <person name="Broughton W.J."/>
            <person name="Rosenthal A."/>
        </authorList>
    </citation>
    <scope>NUCLEOTIDE SEQUENCE [GENOMIC DNA]</scope>
</reference>
<reference key="2">
    <citation type="journal article" date="1997" name="Nature">
        <title>Molecular basis of symbiosis between Rhizobium and legumes.</title>
        <authorList>
            <person name="Freiberg C.A."/>
            <person name="Fellay R."/>
            <person name="Bairoch A."/>
            <person name="Broughton W.J."/>
            <person name="Rosenthal A."/>
            <person name="Perret X."/>
        </authorList>
    </citation>
    <scope>NUCLEOTIDE SEQUENCE [LARGE SCALE GENOMIC DNA]</scope>
    <source>
        <strain>NBRC 101917 / NGR234</strain>
    </source>
</reference>
<reference key="3">
    <citation type="journal article" date="2009" name="Appl. Environ. Microbiol.">
        <title>Rhizobium sp. strain NGR234 possesses a remarkable number of secretion systems.</title>
        <authorList>
            <person name="Schmeisser C."/>
            <person name="Liesegang H."/>
            <person name="Krysciak D."/>
            <person name="Bakkou N."/>
            <person name="Le Quere A."/>
            <person name="Wollherr A."/>
            <person name="Heinemeyer I."/>
            <person name="Morgenstern B."/>
            <person name="Pommerening-Roeser A."/>
            <person name="Flores M."/>
            <person name="Palacios R."/>
            <person name="Brenner S."/>
            <person name="Gottschalk G."/>
            <person name="Schmitz R.A."/>
            <person name="Broughton W.J."/>
            <person name="Perret X."/>
            <person name="Strittmatter A.W."/>
            <person name="Streit W.R."/>
        </authorList>
    </citation>
    <scope>NUCLEOTIDE SEQUENCE [LARGE SCALE GENOMIC DNA]</scope>
    <source>
        <strain>NBRC 101917 / NGR234</strain>
    </source>
</reference>
<evidence type="ECO:0000250" key="1"/>
<evidence type="ECO:0000255" key="2">
    <source>
        <dbReference type="PROSITE-ProRule" id="PRU00434"/>
    </source>
</evidence>
<evidence type="ECO:0000305" key="3"/>
<gene>
    <name type="ordered locus">NGR_a01410</name>
    <name type="ORF">y4tR</name>
</gene>
<feature type="chain" id="PRO_0000093275" description="Probable peptide ABC transporter ATP-binding protein y4tR">
    <location>
        <begin position="1"/>
        <end position="335"/>
    </location>
</feature>
<feature type="domain" description="ABC transporter" evidence="2">
    <location>
        <begin position="15"/>
        <end position="264"/>
    </location>
</feature>
<feature type="binding site" evidence="2">
    <location>
        <begin position="49"/>
        <end position="56"/>
    </location>
    <ligand>
        <name>ATP</name>
        <dbReference type="ChEBI" id="CHEBI:30616"/>
    </ligand>
</feature>
<comment type="function">
    <text>Probably part of a binding-protein-dependent transport system y4tOPQRS for a peptide. Probably responsible for energy coupling to the transport system.</text>
</comment>
<comment type="subcellular location">
    <subcellularLocation>
        <location evidence="1">Cell inner membrane</location>
        <topology evidence="1">Peripheral membrane protein</topology>
    </subcellularLocation>
</comment>
<comment type="similarity">
    <text evidence="3">Belongs to the ABC transporter superfamily.</text>
</comment>
<name>Y4TR_SINFN</name>
<dbReference type="EMBL" id="Z68203">
    <property type="protein sequence ID" value="CAA92400.1"/>
    <property type="molecule type" value="Genomic_DNA"/>
</dbReference>
<dbReference type="EMBL" id="U00090">
    <property type="protein sequence ID" value="AAB91871.1"/>
    <property type="molecule type" value="Genomic_DNA"/>
</dbReference>
<dbReference type="RefSeq" id="NP_444084.1">
    <property type="nucleotide sequence ID" value="NC_000914.2"/>
</dbReference>
<dbReference type="RefSeq" id="WP_010875179.1">
    <property type="nucleotide sequence ID" value="NC_000914.2"/>
</dbReference>
<dbReference type="SMR" id="Q53193"/>
<dbReference type="KEGG" id="rhi:NGR_a01410"/>
<dbReference type="PATRIC" id="fig|394.7.peg.127"/>
<dbReference type="eggNOG" id="COG0444">
    <property type="taxonomic scope" value="Bacteria"/>
</dbReference>
<dbReference type="HOGENOM" id="CLU_000604_1_23_5"/>
<dbReference type="OrthoDB" id="9815712at2"/>
<dbReference type="Proteomes" id="UP000001054">
    <property type="component" value="Plasmid pNGR234a"/>
</dbReference>
<dbReference type="GO" id="GO:0005886">
    <property type="term" value="C:plasma membrane"/>
    <property type="evidence" value="ECO:0007669"/>
    <property type="project" value="UniProtKB-SubCell"/>
</dbReference>
<dbReference type="GO" id="GO:0005524">
    <property type="term" value="F:ATP binding"/>
    <property type="evidence" value="ECO:0007669"/>
    <property type="project" value="UniProtKB-KW"/>
</dbReference>
<dbReference type="GO" id="GO:0016887">
    <property type="term" value="F:ATP hydrolysis activity"/>
    <property type="evidence" value="ECO:0007669"/>
    <property type="project" value="InterPro"/>
</dbReference>
<dbReference type="GO" id="GO:0006865">
    <property type="term" value="P:amino acid transport"/>
    <property type="evidence" value="ECO:0007669"/>
    <property type="project" value="UniProtKB-KW"/>
</dbReference>
<dbReference type="GO" id="GO:0015833">
    <property type="term" value="P:peptide transport"/>
    <property type="evidence" value="ECO:0007669"/>
    <property type="project" value="InterPro"/>
</dbReference>
<dbReference type="CDD" id="cd03257">
    <property type="entry name" value="ABC_NikE_OppD_transporters"/>
    <property type="match status" value="1"/>
</dbReference>
<dbReference type="FunFam" id="3.40.50.300:FF:000016">
    <property type="entry name" value="Oligopeptide ABC transporter ATP-binding component"/>
    <property type="match status" value="1"/>
</dbReference>
<dbReference type="Gene3D" id="3.40.50.300">
    <property type="entry name" value="P-loop containing nucleotide triphosphate hydrolases"/>
    <property type="match status" value="1"/>
</dbReference>
<dbReference type="InterPro" id="IPR003593">
    <property type="entry name" value="AAA+_ATPase"/>
</dbReference>
<dbReference type="InterPro" id="IPR050388">
    <property type="entry name" value="ABC_Ni/Peptide_Import"/>
</dbReference>
<dbReference type="InterPro" id="IPR003439">
    <property type="entry name" value="ABC_transporter-like_ATP-bd"/>
</dbReference>
<dbReference type="InterPro" id="IPR017871">
    <property type="entry name" value="ABC_transporter-like_CS"/>
</dbReference>
<dbReference type="InterPro" id="IPR013563">
    <property type="entry name" value="Oligopep_ABC_C"/>
</dbReference>
<dbReference type="InterPro" id="IPR027417">
    <property type="entry name" value="P-loop_NTPase"/>
</dbReference>
<dbReference type="NCBIfam" id="TIGR01727">
    <property type="entry name" value="oligo_HPY"/>
    <property type="match status" value="1"/>
</dbReference>
<dbReference type="PANTHER" id="PTHR43297:SF2">
    <property type="entry name" value="DIPEPTIDE TRANSPORT ATP-BINDING PROTEIN DPPD"/>
    <property type="match status" value="1"/>
</dbReference>
<dbReference type="PANTHER" id="PTHR43297">
    <property type="entry name" value="OLIGOPEPTIDE TRANSPORT ATP-BINDING PROTEIN APPD"/>
    <property type="match status" value="1"/>
</dbReference>
<dbReference type="Pfam" id="PF00005">
    <property type="entry name" value="ABC_tran"/>
    <property type="match status" value="1"/>
</dbReference>
<dbReference type="Pfam" id="PF08352">
    <property type="entry name" value="oligo_HPY"/>
    <property type="match status" value="1"/>
</dbReference>
<dbReference type="SMART" id="SM00382">
    <property type="entry name" value="AAA"/>
    <property type="match status" value="1"/>
</dbReference>
<dbReference type="SUPFAM" id="SSF52540">
    <property type="entry name" value="P-loop containing nucleoside triphosphate hydrolases"/>
    <property type="match status" value="1"/>
</dbReference>
<dbReference type="PROSITE" id="PS00211">
    <property type="entry name" value="ABC_TRANSPORTER_1"/>
    <property type="match status" value="1"/>
</dbReference>
<dbReference type="PROSITE" id="PS50893">
    <property type="entry name" value="ABC_TRANSPORTER_2"/>
    <property type="match status" value="1"/>
</dbReference>
<proteinExistence type="inferred from homology"/>
<protein>
    <recommendedName>
        <fullName>Probable peptide ABC transporter ATP-binding protein y4tR</fullName>
    </recommendedName>
</protein>